<evidence type="ECO:0000250" key="1">
    <source>
        <dbReference type="UniProtKB" id="Q8WWV3"/>
    </source>
</evidence>
<evidence type="ECO:0000255" key="2"/>
<evidence type="ECO:0000269" key="3">
    <source>
    </source>
</evidence>
<evidence type="ECO:0000305" key="4"/>
<dbReference type="EC" id="1.6.5.-" evidence="1"/>
<dbReference type="EMBL" id="BC053171">
    <property type="protein sequence ID" value="AAH53171.1"/>
    <property type="status" value="ALT_INIT"/>
    <property type="molecule type" value="mRNA"/>
</dbReference>
<dbReference type="RefSeq" id="NP_956646.1">
    <property type="nucleotide sequence ID" value="NM_200352.1"/>
</dbReference>
<dbReference type="SMR" id="Q7T3C7"/>
<dbReference type="FunCoup" id="Q7T3C7">
    <property type="interactions" value="1648"/>
</dbReference>
<dbReference type="STRING" id="7955.ENSDARP00000040031"/>
<dbReference type="PaxDb" id="7955-ENSDARP00000040031"/>
<dbReference type="GeneID" id="393323"/>
<dbReference type="KEGG" id="dre:393323"/>
<dbReference type="AGR" id="ZFIN:ZDB-GENE-040426-1314"/>
<dbReference type="CTD" id="84816"/>
<dbReference type="ZFIN" id="ZDB-GENE-040426-1314">
    <property type="gene designation" value="rtn4ip1"/>
</dbReference>
<dbReference type="eggNOG" id="KOG1198">
    <property type="taxonomic scope" value="Eukaryota"/>
</dbReference>
<dbReference type="InParanoid" id="Q7T3C7"/>
<dbReference type="OrthoDB" id="48317at2759"/>
<dbReference type="PhylomeDB" id="Q7T3C7"/>
<dbReference type="UniPathway" id="UPA00232"/>
<dbReference type="PRO" id="PR:Q7T3C7"/>
<dbReference type="Proteomes" id="UP000000437">
    <property type="component" value="Chromosome 17"/>
</dbReference>
<dbReference type="GO" id="GO:0005759">
    <property type="term" value="C:mitochondrial matrix"/>
    <property type="evidence" value="ECO:0007669"/>
    <property type="project" value="UniProtKB-SubCell"/>
</dbReference>
<dbReference type="GO" id="GO:0005741">
    <property type="term" value="C:mitochondrial outer membrane"/>
    <property type="evidence" value="ECO:0000250"/>
    <property type="project" value="UniProtKB"/>
</dbReference>
<dbReference type="GO" id="GO:0005739">
    <property type="term" value="C:mitochondrion"/>
    <property type="evidence" value="ECO:0000318"/>
    <property type="project" value="GO_Central"/>
</dbReference>
<dbReference type="GO" id="GO:0016491">
    <property type="term" value="F:oxidoreductase activity"/>
    <property type="evidence" value="ECO:0007669"/>
    <property type="project" value="InterPro"/>
</dbReference>
<dbReference type="GO" id="GO:0042462">
    <property type="term" value="P:eye photoreceptor cell development"/>
    <property type="evidence" value="ECO:0000315"/>
    <property type="project" value="ZFIN"/>
</dbReference>
<dbReference type="GO" id="GO:0050773">
    <property type="term" value="P:regulation of dendrite development"/>
    <property type="evidence" value="ECO:0000250"/>
    <property type="project" value="UniProtKB"/>
</dbReference>
<dbReference type="GO" id="GO:0010842">
    <property type="term" value="P:retina layer formation"/>
    <property type="evidence" value="ECO:0000315"/>
    <property type="project" value="UniProtKB"/>
</dbReference>
<dbReference type="CDD" id="cd08248">
    <property type="entry name" value="RTN4I1"/>
    <property type="match status" value="1"/>
</dbReference>
<dbReference type="FunFam" id="3.40.50.720:FF:000147">
    <property type="entry name" value="Reticulon-4-interacting protein 1 homolog, mitochondrial"/>
    <property type="match status" value="1"/>
</dbReference>
<dbReference type="FunFam" id="3.90.180.10:FF:000009">
    <property type="entry name" value="Reticulon-4-interacting protein 1, mitochondrial"/>
    <property type="match status" value="1"/>
</dbReference>
<dbReference type="Gene3D" id="3.90.180.10">
    <property type="entry name" value="Medium-chain alcohol dehydrogenases, catalytic domain"/>
    <property type="match status" value="1"/>
</dbReference>
<dbReference type="Gene3D" id="3.40.50.720">
    <property type="entry name" value="NAD(P)-binding Rossmann-like Domain"/>
    <property type="match status" value="1"/>
</dbReference>
<dbReference type="InterPro" id="IPR013154">
    <property type="entry name" value="ADH-like_N"/>
</dbReference>
<dbReference type="InterPro" id="IPR011032">
    <property type="entry name" value="GroES-like_sf"/>
</dbReference>
<dbReference type="InterPro" id="IPR036291">
    <property type="entry name" value="NAD(P)-bd_dom_sf"/>
</dbReference>
<dbReference type="InterPro" id="IPR020843">
    <property type="entry name" value="PKS_ER"/>
</dbReference>
<dbReference type="InterPro" id="IPR037397">
    <property type="entry name" value="RTN4I1"/>
</dbReference>
<dbReference type="InterPro" id="IPR050700">
    <property type="entry name" value="YIM1/Zinc_Alcohol_DH_Fams"/>
</dbReference>
<dbReference type="PANTHER" id="PTHR11695">
    <property type="entry name" value="ALCOHOL DEHYDROGENASE RELATED"/>
    <property type="match status" value="1"/>
</dbReference>
<dbReference type="PANTHER" id="PTHR11695:SF294">
    <property type="entry name" value="RETICULON-4-INTERACTING PROTEIN 1, MITOCHONDRIAL"/>
    <property type="match status" value="1"/>
</dbReference>
<dbReference type="Pfam" id="PF08240">
    <property type="entry name" value="ADH_N"/>
    <property type="match status" value="1"/>
</dbReference>
<dbReference type="Pfam" id="PF13602">
    <property type="entry name" value="ADH_zinc_N_2"/>
    <property type="match status" value="1"/>
</dbReference>
<dbReference type="SMART" id="SM00829">
    <property type="entry name" value="PKS_ER"/>
    <property type="match status" value="1"/>
</dbReference>
<dbReference type="SUPFAM" id="SSF50129">
    <property type="entry name" value="GroES-like"/>
    <property type="match status" value="1"/>
</dbReference>
<dbReference type="SUPFAM" id="SSF51735">
    <property type="entry name" value="NAD(P)-binding Rossmann-fold domains"/>
    <property type="match status" value="1"/>
</dbReference>
<reference key="1">
    <citation type="submission" date="2003-06" db="EMBL/GenBank/DDBJ databases">
        <authorList>
            <consortium name="NIH - Zebrafish Gene Collection (ZGC) project"/>
        </authorList>
    </citation>
    <scope>NUCLEOTIDE SEQUENCE [LARGE SCALE MRNA]</scope>
    <source>
        <tissue>Kidney</tissue>
    </source>
</reference>
<reference key="2">
    <citation type="journal article" date="2015" name="Am. J. Hum. Genet.">
        <title>Recessive mutations in RTN4IP1 cause isolated and syndromic optic neuropathies.</title>
        <authorList>
            <person name="Angebault C."/>
            <person name="Guichet P.O."/>
            <person name="Talmat-Amar Y."/>
            <person name="Charif M."/>
            <person name="Gerber S."/>
            <person name="Fares-Taie L."/>
            <person name="Gueguen N."/>
            <person name="Halloy F."/>
            <person name="Moore D."/>
            <person name="Amati-Bonneau P."/>
            <person name="Manes G."/>
            <person name="Hebrard M."/>
            <person name="Bocquet B."/>
            <person name="Quiles M."/>
            <person name="Piro-Megy C."/>
            <person name="Teigell M."/>
            <person name="Delettre C."/>
            <person name="Rossel M."/>
            <person name="Meunier I."/>
            <person name="Preising M."/>
            <person name="Lorenz B."/>
            <person name="Carelli V."/>
            <person name="Chinnery P.F."/>
            <person name="Yu-Wai-Man P."/>
            <person name="Kaplan J."/>
            <person name="Roubertie A."/>
            <person name="Barakat A."/>
            <person name="Bonneau D."/>
            <person name="Reynier P."/>
            <person name="Rozet J.M."/>
            <person name="Bomont P."/>
            <person name="Hamel C.P."/>
            <person name="Lenaers G."/>
        </authorList>
    </citation>
    <scope>FUNCTION</scope>
</reference>
<sequence>MLMCRRWLVCSLRCHYRSFSFSAARRTVMPAWVIDKYGKNDVLRFTKNAALPIIHYPNEVVVKVHAAGLNPIDISMRGGYGAATMAMKRDPLNISQSGGEFPLILGRDVSGEIMECGLDVKYFKPGDQVWAAIPPWKQGSLAEFVVVSGNEVSHKPKSLRHDEAASIPYVAATAWSAIVNTGGLNKDNSAKKRVLILGGSGGVGTFAIQMVKAWGAHVTVTCSQNAERLVRDLGADDVVDYTAGPVEKQLKNLEKFDLILDSIGGETEKWALDLLKPWSGAKFVTLITPFLQNTDRLGLADGMMQSAVTVGCKVVKNLRKGVHYRWGFFAPSGSALDEVSEMVDAGKVRPVVEEVFSFAQVPEAFQKVEQGHARGKTVVSIMEDQKE</sequence>
<accession>Q7T3C7</accession>
<feature type="transit peptide" description="Mitochondrion" evidence="2">
    <location>
        <begin position="1"/>
        <end position="27"/>
    </location>
</feature>
<feature type="chain" id="PRO_0000042255" description="NAD(P)H oxidoreductase RTN4IP1, mitochondrial">
    <location>
        <begin position="28"/>
        <end position="387"/>
    </location>
</feature>
<feature type="domain" description="Enoyl reductase (ER)" evidence="2">
    <location>
        <begin position="38"/>
        <end position="379"/>
    </location>
</feature>
<feature type="binding site" evidence="1">
    <location>
        <position position="200"/>
    </location>
    <ligand>
        <name>NADPH</name>
        <dbReference type="ChEBI" id="CHEBI:57783"/>
    </ligand>
</feature>
<feature type="binding site" evidence="1">
    <location>
        <position position="202"/>
    </location>
    <ligand>
        <name>NADPH</name>
        <dbReference type="ChEBI" id="CHEBI:57783"/>
    </ligand>
</feature>
<feature type="binding site" evidence="1">
    <location>
        <position position="203"/>
    </location>
    <ligand>
        <name>NADPH</name>
        <dbReference type="ChEBI" id="CHEBI:57783"/>
    </ligand>
</feature>
<feature type="binding site" evidence="1">
    <location>
        <position position="223"/>
    </location>
    <ligand>
        <name>NADPH</name>
        <dbReference type="ChEBI" id="CHEBI:57783"/>
    </ligand>
</feature>
<feature type="binding site" evidence="1">
    <location>
        <position position="241"/>
    </location>
    <ligand>
        <name>NADPH</name>
        <dbReference type="ChEBI" id="CHEBI:57783"/>
    </ligand>
</feature>
<feature type="binding site" evidence="1">
    <location>
        <position position="286"/>
    </location>
    <ligand>
        <name>NADPH</name>
        <dbReference type="ChEBI" id="CHEBI:57783"/>
    </ligand>
</feature>
<feature type="binding site" evidence="1">
    <location>
        <position position="327"/>
    </location>
    <ligand>
        <name>NADPH</name>
        <dbReference type="ChEBI" id="CHEBI:57783"/>
    </ligand>
</feature>
<feature type="binding site" evidence="1">
    <location>
        <position position="329"/>
    </location>
    <ligand>
        <name>NADPH</name>
        <dbReference type="ChEBI" id="CHEBI:57783"/>
    </ligand>
</feature>
<feature type="binding site" evidence="1">
    <location>
        <position position="372"/>
    </location>
    <ligand>
        <name>NADPH</name>
        <dbReference type="ChEBI" id="CHEBI:57783"/>
    </ligand>
</feature>
<feature type="binding site" evidence="1">
    <location>
        <position position="373"/>
    </location>
    <ligand>
        <name>NADPH</name>
        <dbReference type="ChEBI" id="CHEBI:57783"/>
    </ligand>
</feature>
<feature type="binding site" evidence="1">
    <location>
        <position position="374"/>
    </location>
    <ligand>
        <name>NADPH</name>
        <dbReference type="ChEBI" id="CHEBI:57783"/>
    </ligand>
</feature>
<name>RT4I1_DANRE</name>
<organism>
    <name type="scientific">Danio rerio</name>
    <name type="common">Zebrafish</name>
    <name type="synonym">Brachydanio rerio</name>
    <dbReference type="NCBI Taxonomy" id="7955"/>
    <lineage>
        <taxon>Eukaryota</taxon>
        <taxon>Metazoa</taxon>
        <taxon>Chordata</taxon>
        <taxon>Craniata</taxon>
        <taxon>Vertebrata</taxon>
        <taxon>Euteleostomi</taxon>
        <taxon>Actinopterygii</taxon>
        <taxon>Neopterygii</taxon>
        <taxon>Teleostei</taxon>
        <taxon>Ostariophysi</taxon>
        <taxon>Cypriniformes</taxon>
        <taxon>Danionidae</taxon>
        <taxon>Danioninae</taxon>
        <taxon>Danio</taxon>
    </lineage>
</organism>
<proteinExistence type="evidence at transcript level"/>
<keyword id="KW-0472">Membrane</keyword>
<keyword id="KW-0496">Mitochondrion</keyword>
<keyword id="KW-1000">Mitochondrion outer membrane</keyword>
<keyword id="KW-0521">NADP</keyword>
<keyword id="KW-0524">Neurogenesis</keyword>
<keyword id="KW-0547">Nucleotide-binding</keyword>
<keyword id="KW-0560">Oxidoreductase</keyword>
<keyword id="KW-1185">Reference proteome</keyword>
<keyword id="KW-0809">Transit peptide</keyword>
<keyword id="KW-0831">Ubiquinone biosynthesis</keyword>
<gene>
    <name type="primary">rtn4ip1</name>
</gene>
<protein>
    <recommendedName>
        <fullName evidence="4">NAD(P)H oxidoreductase RTN4IP1, mitochondrial</fullName>
        <ecNumber evidence="1">1.6.5.-</ecNumber>
    </recommendedName>
    <alternativeName>
        <fullName>Reticulon-4-interacting protein 1 homolog</fullName>
    </alternativeName>
</protein>
<comment type="function">
    <text evidence="1 3">NAD(P)H oxidoreductase involved in the ubiquinone biosynthetic pathway. Required for the O-methyltransferase activity of COQ3 (By similarity). Able to catalyze the oxidoreduction of 3-demethylubiquinone into 3-demethylubiquinol in vitro (By similarity). However, it is unclear if 3-demethylubiquinone constitutes a substrate in vivo (By similarity). May also play a role in the regulation of retinal ganglion cell (RGC) neurite outgrowth, and hence in the development of the inner retina and optic nerve (PubMed:26593267).</text>
</comment>
<comment type="catalytic activity">
    <reaction evidence="1">
        <text>a 3-demethylubiquinone + NADH + 2 H(+) = a 3-demethylubiquinol + NAD(+)</text>
        <dbReference type="Rhea" id="RHEA:83235"/>
        <dbReference type="Rhea" id="RHEA-COMP:10914"/>
        <dbReference type="Rhea" id="RHEA-COMP:19654"/>
        <dbReference type="ChEBI" id="CHEBI:15378"/>
        <dbReference type="ChEBI" id="CHEBI:57540"/>
        <dbReference type="ChEBI" id="CHEBI:57945"/>
        <dbReference type="ChEBI" id="CHEBI:84422"/>
        <dbReference type="ChEBI" id="CHEBI:231825"/>
    </reaction>
</comment>
<comment type="catalytic activity">
    <reaction evidence="1">
        <text>a 3-demethylubiquinone + NADPH + 2 H(+) = a 3-demethylubiquinol + NADP(+)</text>
        <dbReference type="Rhea" id="RHEA:83239"/>
        <dbReference type="Rhea" id="RHEA-COMP:10914"/>
        <dbReference type="Rhea" id="RHEA-COMP:19654"/>
        <dbReference type="ChEBI" id="CHEBI:15378"/>
        <dbReference type="ChEBI" id="CHEBI:57783"/>
        <dbReference type="ChEBI" id="CHEBI:58349"/>
        <dbReference type="ChEBI" id="CHEBI:84422"/>
        <dbReference type="ChEBI" id="CHEBI:231825"/>
    </reaction>
</comment>
<comment type="catalytic activity">
    <reaction evidence="1">
        <text>3-demethylubiquinone-10 + NADH + 2 H(+) = 3-demethylubiquinol-10 + NAD(+)</text>
        <dbReference type="Rhea" id="RHEA:83243"/>
        <dbReference type="ChEBI" id="CHEBI:15378"/>
        <dbReference type="ChEBI" id="CHEBI:57540"/>
        <dbReference type="ChEBI" id="CHEBI:57945"/>
        <dbReference type="ChEBI" id="CHEBI:64182"/>
        <dbReference type="ChEBI" id="CHEBI:231824"/>
    </reaction>
</comment>
<comment type="catalytic activity">
    <reaction evidence="1">
        <text>3-demethylubiquinone-10 + NADPH + 2 H(+) = 3-demethylubiquinol-10 + NADP(+)</text>
        <dbReference type="Rhea" id="RHEA:83247"/>
        <dbReference type="ChEBI" id="CHEBI:15378"/>
        <dbReference type="ChEBI" id="CHEBI:57783"/>
        <dbReference type="ChEBI" id="CHEBI:58349"/>
        <dbReference type="ChEBI" id="CHEBI:64182"/>
        <dbReference type="ChEBI" id="CHEBI:231824"/>
    </reaction>
</comment>
<comment type="pathway">
    <text evidence="1">Cofactor biosynthesis; ubiquinone biosynthesis.</text>
</comment>
<comment type="subcellular location">
    <subcellularLocation>
        <location evidence="1">Mitochondrion matrix</location>
    </subcellularLocation>
    <subcellularLocation>
        <location evidence="1">Mitochondrion outer membrane</location>
    </subcellularLocation>
    <text evidence="1">Mainly localizes to the mitochondrial matrix.</text>
</comment>
<comment type="similarity">
    <text evidence="4">Belongs to the zinc-containing alcohol dehydrogenase family. Quinone oxidoreductase subfamily.</text>
</comment>
<comment type="caution">
    <text evidence="4">It is uncertain whether Met-1 or Met-3 is the initiator.</text>
</comment>
<comment type="sequence caution" evidence="4">
    <conflict type="erroneous initiation">
        <sequence resource="EMBL-CDS" id="AAH53171"/>
    </conflict>
</comment>